<proteinExistence type="inferred from homology"/>
<feature type="chain" id="PRO_0000112302" description="Carbamoyl phosphate synthase small chain">
    <location>
        <begin position="1"/>
        <end position="387"/>
    </location>
</feature>
<feature type="domain" description="Glutamine amidotransferase type-1" evidence="1">
    <location>
        <begin position="193"/>
        <end position="380"/>
    </location>
</feature>
<feature type="region of interest" description="CPSase" evidence="1">
    <location>
        <begin position="1"/>
        <end position="189"/>
    </location>
</feature>
<feature type="active site" description="Nucleophile" evidence="1">
    <location>
        <position position="269"/>
    </location>
</feature>
<feature type="active site" evidence="1">
    <location>
        <position position="353"/>
    </location>
</feature>
<feature type="active site" evidence="1">
    <location>
        <position position="355"/>
    </location>
</feature>
<feature type="binding site" evidence="1">
    <location>
        <position position="47"/>
    </location>
    <ligand>
        <name>L-glutamine</name>
        <dbReference type="ChEBI" id="CHEBI:58359"/>
    </ligand>
</feature>
<feature type="binding site" evidence="1">
    <location>
        <position position="241"/>
    </location>
    <ligand>
        <name>L-glutamine</name>
        <dbReference type="ChEBI" id="CHEBI:58359"/>
    </ligand>
</feature>
<feature type="binding site" evidence="1">
    <location>
        <position position="243"/>
    </location>
    <ligand>
        <name>L-glutamine</name>
        <dbReference type="ChEBI" id="CHEBI:58359"/>
    </ligand>
</feature>
<feature type="binding site" evidence="1">
    <location>
        <position position="270"/>
    </location>
    <ligand>
        <name>L-glutamine</name>
        <dbReference type="ChEBI" id="CHEBI:58359"/>
    </ligand>
</feature>
<feature type="binding site" evidence="1">
    <location>
        <position position="273"/>
    </location>
    <ligand>
        <name>L-glutamine</name>
        <dbReference type="ChEBI" id="CHEBI:58359"/>
    </ligand>
</feature>
<feature type="binding site" evidence="1">
    <location>
        <position position="311"/>
    </location>
    <ligand>
        <name>L-glutamine</name>
        <dbReference type="ChEBI" id="CHEBI:58359"/>
    </ligand>
</feature>
<feature type="binding site" evidence="1">
    <location>
        <position position="313"/>
    </location>
    <ligand>
        <name>L-glutamine</name>
        <dbReference type="ChEBI" id="CHEBI:58359"/>
    </ligand>
</feature>
<feature type="binding site" evidence="1">
    <location>
        <position position="314"/>
    </location>
    <ligand>
        <name>L-glutamine</name>
        <dbReference type="ChEBI" id="CHEBI:58359"/>
    </ligand>
</feature>
<gene>
    <name evidence="1" type="primary">carA</name>
    <name type="ordered locus">plu0603</name>
</gene>
<reference key="1">
    <citation type="journal article" date="2003" name="Nat. Biotechnol.">
        <title>The genome sequence of the entomopathogenic bacterium Photorhabdus luminescens.</title>
        <authorList>
            <person name="Duchaud E."/>
            <person name="Rusniok C."/>
            <person name="Frangeul L."/>
            <person name="Buchrieser C."/>
            <person name="Givaudan A."/>
            <person name="Taourit S."/>
            <person name="Bocs S."/>
            <person name="Boursaux-Eude C."/>
            <person name="Chandler M."/>
            <person name="Charles J.-F."/>
            <person name="Dassa E."/>
            <person name="Derose R."/>
            <person name="Derzelle S."/>
            <person name="Freyssinet G."/>
            <person name="Gaudriault S."/>
            <person name="Medigue C."/>
            <person name="Lanois A."/>
            <person name="Powell K."/>
            <person name="Siguier P."/>
            <person name="Vincent R."/>
            <person name="Wingate V."/>
            <person name="Zouine M."/>
            <person name="Glaser P."/>
            <person name="Boemare N."/>
            <person name="Danchin A."/>
            <person name="Kunst F."/>
        </authorList>
    </citation>
    <scope>NUCLEOTIDE SEQUENCE [LARGE SCALE GENOMIC DNA]</scope>
    <source>
        <strain>DSM 15139 / CIP 105565 / TT01</strain>
    </source>
</reference>
<name>CARA_PHOLL</name>
<comment type="function">
    <text evidence="1">Small subunit of the glutamine-dependent carbamoyl phosphate synthetase (CPSase). CPSase catalyzes the formation of carbamoyl phosphate from the ammonia moiety of glutamine, carbonate, and phosphate donated by ATP, constituting the first step of 2 biosynthetic pathways, one leading to arginine and/or urea and the other to pyrimidine nucleotides. The small subunit (glutamine amidotransferase) binds and cleaves glutamine to supply the large subunit with the substrate ammonia.</text>
</comment>
<comment type="catalytic activity">
    <reaction evidence="1">
        <text>hydrogencarbonate + L-glutamine + 2 ATP + H2O = carbamoyl phosphate + L-glutamate + 2 ADP + phosphate + 2 H(+)</text>
        <dbReference type="Rhea" id="RHEA:18633"/>
        <dbReference type="ChEBI" id="CHEBI:15377"/>
        <dbReference type="ChEBI" id="CHEBI:15378"/>
        <dbReference type="ChEBI" id="CHEBI:17544"/>
        <dbReference type="ChEBI" id="CHEBI:29985"/>
        <dbReference type="ChEBI" id="CHEBI:30616"/>
        <dbReference type="ChEBI" id="CHEBI:43474"/>
        <dbReference type="ChEBI" id="CHEBI:58228"/>
        <dbReference type="ChEBI" id="CHEBI:58359"/>
        <dbReference type="ChEBI" id="CHEBI:456216"/>
        <dbReference type="EC" id="6.3.5.5"/>
    </reaction>
</comment>
<comment type="catalytic activity">
    <molecule>Carbamoyl phosphate synthase small chain</molecule>
    <reaction evidence="1">
        <text>L-glutamine + H2O = L-glutamate + NH4(+)</text>
        <dbReference type="Rhea" id="RHEA:15889"/>
        <dbReference type="ChEBI" id="CHEBI:15377"/>
        <dbReference type="ChEBI" id="CHEBI:28938"/>
        <dbReference type="ChEBI" id="CHEBI:29985"/>
        <dbReference type="ChEBI" id="CHEBI:58359"/>
    </reaction>
</comment>
<comment type="pathway">
    <text evidence="1">Amino-acid biosynthesis; L-arginine biosynthesis; carbamoyl phosphate from bicarbonate: step 1/1.</text>
</comment>
<comment type="pathway">
    <text evidence="1">Pyrimidine metabolism; UMP biosynthesis via de novo pathway; (S)-dihydroorotate from bicarbonate: step 1/3.</text>
</comment>
<comment type="subunit">
    <text evidence="1">Composed of two chains; the small (or glutamine) chain promotes the hydrolysis of glutamine to ammonia, which is used by the large (or ammonia) chain to synthesize carbamoyl phosphate. Tetramer of heterodimers (alpha,beta)4.</text>
</comment>
<comment type="similarity">
    <text evidence="1">Belongs to the CarA family.</text>
</comment>
<keyword id="KW-0028">Amino-acid biosynthesis</keyword>
<keyword id="KW-0055">Arginine biosynthesis</keyword>
<keyword id="KW-0067">ATP-binding</keyword>
<keyword id="KW-0315">Glutamine amidotransferase</keyword>
<keyword id="KW-0436">Ligase</keyword>
<keyword id="KW-0547">Nucleotide-binding</keyword>
<keyword id="KW-0665">Pyrimidine biosynthesis</keyword>
<keyword id="KW-1185">Reference proteome</keyword>
<organism>
    <name type="scientific">Photorhabdus laumondii subsp. laumondii (strain DSM 15139 / CIP 105565 / TT01)</name>
    <name type="common">Photorhabdus luminescens subsp. laumondii</name>
    <dbReference type="NCBI Taxonomy" id="243265"/>
    <lineage>
        <taxon>Bacteria</taxon>
        <taxon>Pseudomonadati</taxon>
        <taxon>Pseudomonadota</taxon>
        <taxon>Gammaproteobacteria</taxon>
        <taxon>Enterobacterales</taxon>
        <taxon>Morganellaceae</taxon>
        <taxon>Photorhabdus</taxon>
    </lineage>
</organism>
<dbReference type="EC" id="6.3.5.5" evidence="1"/>
<dbReference type="EMBL" id="BX571860">
    <property type="protein sequence ID" value="CAE12898.1"/>
    <property type="molecule type" value="Genomic_DNA"/>
</dbReference>
<dbReference type="RefSeq" id="WP_011144980.1">
    <property type="nucleotide sequence ID" value="NC_005126.1"/>
</dbReference>
<dbReference type="SMR" id="Q7N8W2"/>
<dbReference type="STRING" id="243265.plu0603"/>
<dbReference type="MEROPS" id="C26.954"/>
<dbReference type="GeneID" id="48846890"/>
<dbReference type="KEGG" id="plu:plu0603"/>
<dbReference type="eggNOG" id="COG0505">
    <property type="taxonomic scope" value="Bacteria"/>
</dbReference>
<dbReference type="HOGENOM" id="CLU_035901_2_1_6"/>
<dbReference type="OrthoDB" id="9804328at2"/>
<dbReference type="UniPathway" id="UPA00068">
    <property type="reaction ID" value="UER00171"/>
</dbReference>
<dbReference type="UniPathway" id="UPA00070">
    <property type="reaction ID" value="UER00115"/>
</dbReference>
<dbReference type="Proteomes" id="UP000002514">
    <property type="component" value="Chromosome"/>
</dbReference>
<dbReference type="GO" id="GO:0005524">
    <property type="term" value="F:ATP binding"/>
    <property type="evidence" value="ECO:0007669"/>
    <property type="project" value="UniProtKB-UniRule"/>
</dbReference>
<dbReference type="GO" id="GO:0004088">
    <property type="term" value="F:carbamoyl-phosphate synthase (glutamine-hydrolyzing) activity"/>
    <property type="evidence" value="ECO:0007669"/>
    <property type="project" value="UniProtKB-UniRule"/>
</dbReference>
<dbReference type="GO" id="GO:0004359">
    <property type="term" value="F:glutaminase activity"/>
    <property type="evidence" value="ECO:0007669"/>
    <property type="project" value="RHEA"/>
</dbReference>
<dbReference type="GO" id="GO:0006207">
    <property type="term" value="P:'de novo' pyrimidine nucleobase biosynthetic process"/>
    <property type="evidence" value="ECO:0007669"/>
    <property type="project" value="InterPro"/>
</dbReference>
<dbReference type="GO" id="GO:0044205">
    <property type="term" value="P:'de novo' UMP biosynthetic process"/>
    <property type="evidence" value="ECO:0007669"/>
    <property type="project" value="UniProtKB-UniRule"/>
</dbReference>
<dbReference type="GO" id="GO:0006541">
    <property type="term" value="P:glutamine metabolic process"/>
    <property type="evidence" value="ECO:0007669"/>
    <property type="project" value="InterPro"/>
</dbReference>
<dbReference type="GO" id="GO:0006526">
    <property type="term" value="P:L-arginine biosynthetic process"/>
    <property type="evidence" value="ECO:0007669"/>
    <property type="project" value="UniProtKB-UniRule"/>
</dbReference>
<dbReference type="CDD" id="cd01744">
    <property type="entry name" value="GATase1_CPSase"/>
    <property type="match status" value="1"/>
</dbReference>
<dbReference type="FunFam" id="3.40.50.880:FF:000011">
    <property type="entry name" value="Carbamoyl-phosphate synthase small chain"/>
    <property type="match status" value="1"/>
</dbReference>
<dbReference type="FunFam" id="3.50.30.20:FF:000001">
    <property type="entry name" value="Carbamoyl-phosphate synthase small chain"/>
    <property type="match status" value="1"/>
</dbReference>
<dbReference type="Gene3D" id="3.40.50.880">
    <property type="match status" value="1"/>
</dbReference>
<dbReference type="Gene3D" id="3.50.30.20">
    <property type="entry name" value="Carbamoyl-phosphate synthase small subunit, N-terminal domain"/>
    <property type="match status" value="1"/>
</dbReference>
<dbReference type="HAMAP" id="MF_01209">
    <property type="entry name" value="CPSase_S_chain"/>
    <property type="match status" value="1"/>
</dbReference>
<dbReference type="InterPro" id="IPR050472">
    <property type="entry name" value="Anth_synth/Amidotransfase"/>
</dbReference>
<dbReference type="InterPro" id="IPR006274">
    <property type="entry name" value="CarbamoylP_synth_ssu"/>
</dbReference>
<dbReference type="InterPro" id="IPR002474">
    <property type="entry name" value="CarbamoylP_synth_ssu_N"/>
</dbReference>
<dbReference type="InterPro" id="IPR036480">
    <property type="entry name" value="CarbP_synth_ssu_N_sf"/>
</dbReference>
<dbReference type="InterPro" id="IPR029062">
    <property type="entry name" value="Class_I_gatase-like"/>
</dbReference>
<dbReference type="InterPro" id="IPR035686">
    <property type="entry name" value="CPSase_GATase1"/>
</dbReference>
<dbReference type="InterPro" id="IPR017926">
    <property type="entry name" value="GATASE"/>
</dbReference>
<dbReference type="NCBIfam" id="TIGR01368">
    <property type="entry name" value="CPSaseIIsmall"/>
    <property type="match status" value="1"/>
</dbReference>
<dbReference type="NCBIfam" id="NF009475">
    <property type="entry name" value="PRK12838.1"/>
    <property type="match status" value="1"/>
</dbReference>
<dbReference type="PANTHER" id="PTHR43418:SF7">
    <property type="entry name" value="CARBAMOYL-PHOSPHATE SYNTHASE SMALL CHAIN"/>
    <property type="match status" value="1"/>
</dbReference>
<dbReference type="PANTHER" id="PTHR43418">
    <property type="entry name" value="MULTIFUNCTIONAL TRYPTOPHAN BIOSYNTHESIS PROTEIN-RELATED"/>
    <property type="match status" value="1"/>
</dbReference>
<dbReference type="Pfam" id="PF00988">
    <property type="entry name" value="CPSase_sm_chain"/>
    <property type="match status" value="1"/>
</dbReference>
<dbReference type="Pfam" id="PF00117">
    <property type="entry name" value="GATase"/>
    <property type="match status" value="1"/>
</dbReference>
<dbReference type="PRINTS" id="PR00099">
    <property type="entry name" value="CPSGATASE"/>
</dbReference>
<dbReference type="PRINTS" id="PR00096">
    <property type="entry name" value="GATASE"/>
</dbReference>
<dbReference type="SMART" id="SM01097">
    <property type="entry name" value="CPSase_sm_chain"/>
    <property type="match status" value="1"/>
</dbReference>
<dbReference type="SUPFAM" id="SSF52021">
    <property type="entry name" value="Carbamoyl phosphate synthetase, small subunit N-terminal domain"/>
    <property type="match status" value="1"/>
</dbReference>
<dbReference type="SUPFAM" id="SSF52317">
    <property type="entry name" value="Class I glutamine amidotransferase-like"/>
    <property type="match status" value="1"/>
</dbReference>
<dbReference type="PROSITE" id="PS51273">
    <property type="entry name" value="GATASE_TYPE_1"/>
    <property type="match status" value="1"/>
</dbReference>
<sequence length="387" mass="42415">MIKSAILVLEDGTQFHGRAIGAEGAAVGEVVFNTSMTGYQEILTDPSYSRQIVTLTYPHIGNVGVNSVDKESLKVQAQGLVIRDLPLLTSNFRCEETLSDYLKRHNIVAIADIDTRKLTRLLREKGSQNGCIIAGKQIDAQVALEKAQAFPGLEGMDLAKEVTTKQIYPWLQGSWKLAGGLPEDKQEQDLPYHVVAYDFGAKRNILRMLVDRGCRLTVVPAQTSAEDVLKLNPDGIFLSNGPGDPAPCGYAIDAVKTLLETEIPIFGICLGHQLLALASGAETMKMKFGHHGGNHPVKDLECNVVMITAQNHGFAVDEKSLPSNLRVTHKSLFDGTLQGIHRTDKPAFSFQGHPEASPGPHETASLFDHFIELIEQYCQKNNRHNTK</sequence>
<evidence type="ECO:0000255" key="1">
    <source>
        <dbReference type="HAMAP-Rule" id="MF_01209"/>
    </source>
</evidence>
<accession>Q7N8W2</accession>
<protein>
    <recommendedName>
        <fullName evidence="1">Carbamoyl phosphate synthase small chain</fullName>
        <ecNumber evidence="1">6.3.5.5</ecNumber>
    </recommendedName>
    <alternativeName>
        <fullName evidence="1">Carbamoyl phosphate synthetase glutamine chain</fullName>
    </alternativeName>
</protein>